<sequence>MSETANWQPSAAIANLLKRATILAEIRRFFADRGVLEVETPAMGQFTVTDIQLFSFQTEFVGPGAADGMTLYLMTSPEYHMKRLLAAGSGPIYQLGRCFRNEEAGRYHNPEFTMLEWYRPHYDMYRLMNEVDDLLQQILDCESAESLSYQQAFLRYLDIDPLSAEKEKLREIAAKLDLSNIADIEEDRDTLLQLLFAVGVEPHIGTEKPTFIYHFPASQASLAEISKEDHRVAERFEVYFKGVELANGFRELTDSHEQCQRFERDNRKRAALGLPVRPIDENLIGALKQGMPECAGVALGVDRLVMLALGAEKLSDVMAFSITKA</sequence>
<organism>
    <name type="scientific">Photorhabdus laumondii subsp. laumondii (strain DSM 15139 / CIP 105565 / TT01)</name>
    <name type="common">Photorhabdus luminescens subsp. laumondii</name>
    <dbReference type="NCBI Taxonomy" id="243265"/>
    <lineage>
        <taxon>Bacteria</taxon>
        <taxon>Pseudomonadati</taxon>
        <taxon>Pseudomonadota</taxon>
        <taxon>Gammaproteobacteria</taxon>
        <taxon>Enterobacterales</taxon>
        <taxon>Morganellaceae</taxon>
        <taxon>Photorhabdus</taxon>
    </lineage>
</organism>
<protein>
    <recommendedName>
        <fullName evidence="1">Elongation factor P--(R)-beta-lysine ligase</fullName>
        <shortName evidence="1">EF-P--(R)-beta-lysine ligase</shortName>
        <ecNumber evidence="1">6.3.2.-</ecNumber>
    </recommendedName>
    <alternativeName>
        <fullName evidence="1">EF-P post-translational modification enzyme A</fullName>
    </alternativeName>
    <alternativeName>
        <fullName evidence="1">EF-P-lysine lysyltransferase</fullName>
    </alternativeName>
</protein>
<dbReference type="EC" id="6.3.2.-" evidence="1"/>
<dbReference type="EMBL" id="BX571872">
    <property type="protein sequence ID" value="CAE16493.1"/>
    <property type="molecule type" value="Genomic_DNA"/>
</dbReference>
<dbReference type="RefSeq" id="WP_011148239.1">
    <property type="nucleotide sequence ID" value="NC_005126.1"/>
</dbReference>
<dbReference type="SMR" id="Q7MZY6"/>
<dbReference type="STRING" id="243265.plu4121"/>
<dbReference type="GeneID" id="48850338"/>
<dbReference type="KEGG" id="plu:plu4121"/>
<dbReference type="eggNOG" id="COG2269">
    <property type="taxonomic scope" value="Bacteria"/>
</dbReference>
<dbReference type="HOGENOM" id="CLU_008255_1_1_6"/>
<dbReference type="OrthoDB" id="9802326at2"/>
<dbReference type="Proteomes" id="UP000002514">
    <property type="component" value="Chromosome"/>
</dbReference>
<dbReference type="GO" id="GO:0005829">
    <property type="term" value="C:cytosol"/>
    <property type="evidence" value="ECO:0007669"/>
    <property type="project" value="TreeGrafter"/>
</dbReference>
<dbReference type="GO" id="GO:0016880">
    <property type="term" value="F:acid-ammonia (or amide) ligase activity"/>
    <property type="evidence" value="ECO:0007669"/>
    <property type="project" value="UniProtKB-UniRule"/>
</dbReference>
<dbReference type="GO" id="GO:0005524">
    <property type="term" value="F:ATP binding"/>
    <property type="evidence" value="ECO:0007669"/>
    <property type="project" value="UniProtKB-UniRule"/>
</dbReference>
<dbReference type="GO" id="GO:0004824">
    <property type="term" value="F:lysine-tRNA ligase activity"/>
    <property type="evidence" value="ECO:0007669"/>
    <property type="project" value="InterPro"/>
</dbReference>
<dbReference type="GO" id="GO:0000049">
    <property type="term" value="F:tRNA binding"/>
    <property type="evidence" value="ECO:0007669"/>
    <property type="project" value="TreeGrafter"/>
</dbReference>
<dbReference type="GO" id="GO:0006430">
    <property type="term" value="P:lysyl-tRNA aminoacylation"/>
    <property type="evidence" value="ECO:0007669"/>
    <property type="project" value="InterPro"/>
</dbReference>
<dbReference type="FunFam" id="3.30.930.10:FF:000017">
    <property type="entry name" value="Elongation factor P--(R)-beta-lysine ligase"/>
    <property type="match status" value="1"/>
</dbReference>
<dbReference type="Gene3D" id="3.30.930.10">
    <property type="entry name" value="Bira Bifunctional Protein, Domain 2"/>
    <property type="match status" value="1"/>
</dbReference>
<dbReference type="HAMAP" id="MF_00174">
    <property type="entry name" value="EF_P_modif_A"/>
    <property type="match status" value="1"/>
</dbReference>
<dbReference type="InterPro" id="IPR004364">
    <property type="entry name" value="Aa-tRNA-synt_II"/>
</dbReference>
<dbReference type="InterPro" id="IPR006195">
    <property type="entry name" value="aa-tRNA-synth_II"/>
</dbReference>
<dbReference type="InterPro" id="IPR045864">
    <property type="entry name" value="aa-tRNA-synth_II/BPL/LPL"/>
</dbReference>
<dbReference type="InterPro" id="IPR004525">
    <property type="entry name" value="EpmA"/>
</dbReference>
<dbReference type="InterPro" id="IPR018149">
    <property type="entry name" value="Lys-tRNA-synth_II_C"/>
</dbReference>
<dbReference type="NCBIfam" id="TIGR00462">
    <property type="entry name" value="genX"/>
    <property type="match status" value="1"/>
</dbReference>
<dbReference type="NCBIfam" id="NF006828">
    <property type="entry name" value="PRK09350.1"/>
    <property type="match status" value="1"/>
</dbReference>
<dbReference type="PANTHER" id="PTHR42918:SF6">
    <property type="entry name" value="ELONGATION FACTOR P--(R)-BETA-LYSINE LIGASE"/>
    <property type="match status" value="1"/>
</dbReference>
<dbReference type="PANTHER" id="PTHR42918">
    <property type="entry name" value="LYSYL-TRNA SYNTHETASE"/>
    <property type="match status" value="1"/>
</dbReference>
<dbReference type="Pfam" id="PF00152">
    <property type="entry name" value="tRNA-synt_2"/>
    <property type="match status" value="1"/>
</dbReference>
<dbReference type="PRINTS" id="PR00982">
    <property type="entry name" value="TRNASYNTHLYS"/>
</dbReference>
<dbReference type="SUPFAM" id="SSF55681">
    <property type="entry name" value="Class II aaRS and biotin synthetases"/>
    <property type="match status" value="1"/>
</dbReference>
<dbReference type="PROSITE" id="PS50862">
    <property type="entry name" value="AA_TRNA_LIGASE_II"/>
    <property type="match status" value="1"/>
</dbReference>
<accession>Q7MZY6</accession>
<name>EPMA_PHOLL</name>
<comment type="function">
    <text evidence="1">With EpmB is involved in the beta-lysylation step of the post-translational modification of translation elongation factor P (EF-P). Catalyzes the ATP-dependent activation of (R)-beta-lysine produced by EpmB, forming a lysyl-adenylate, from which the beta-lysyl moiety is then transferred to the epsilon-amino group of a conserved specific lysine residue in EF-P.</text>
</comment>
<comment type="catalytic activity">
    <reaction evidence="1">
        <text>D-beta-lysine + L-lysyl-[protein] + ATP = N(6)-((3R)-3,6-diaminohexanoyl)-L-lysyl-[protein] + AMP + diphosphate + H(+)</text>
        <dbReference type="Rhea" id="RHEA:83435"/>
        <dbReference type="Rhea" id="RHEA-COMP:9752"/>
        <dbReference type="Rhea" id="RHEA-COMP:20131"/>
        <dbReference type="ChEBI" id="CHEBI:15378"/>
        <dbReference type="ChEBI" id="CHEBI:29969"/>
        <dbReference type="ChEBI" id="CHEBI:30616"/>
        <dbReference type="ChEBI" id="CHEBI:33019"/>
        <dbReference type="ChEBI" id="CHEBI:84138"/>
        <dbReference type="ChEBI" id="CHEBI:156053"/>
        <dbReference type="ChEBI" id="CHEBI:456215"/>
    </reaction>
    <physiologicalReaction direction="left-to-right" evidence="1">
        <dbReference type="Rhea" id="RHEA:83436"/>
    </physiologicalReaction>
</comment>
<comment type="subunit">
    <text evidence="1">Homodimer.</text>
</comment>
<comment type="similarity">
    <text evidence="1">Belongs to the class-II aminoacyl-tRNA synthetase family. EpmA subfamily.</text>
</comment>
<gene>
    <name evidence="1" type="primary">epmA</name>
    <name type="synonym">genX</name>
    <name type="synonym">yjeA</name>
    <name type="ordered locus">plu4121</name>
</gene>
<proteinExistence type="inferred from homology"/>
<keyword id="KW-0067">ATP-binding</keyword>
<keyword id="KW-0436">Ligase</keyword>
<keyword id="KW-0547">Nucleotide-binding</keyword>
<keyword id="KW-1185">Reference proteome</keyword>
<feature type="chain" id="PRO_0000152726" description="Elongation factor P--(R)-beta-lysine ligase">
    <location>
        <begin position="1"/>
        <end position="325"/>
    </location>
</feature>
<feature type="binding site" evidence="1">
    <location>
        <begin position="76"/>
        <end position="78"/>
    </location>
    <ligand>
        <name>substrate</name>
    </ligand>
</feature>
<feature type="binding site" evidence="1">
    <location>
        <begin position="100"/>
        <end position="102"/>
    </location>
    <ligand>
        <name>ATP</name>
        <dbReference type="ChEBI" id="CHEBI:30616"/>
    </ligand>
</feature>
<feature type="binding site" evidence="1">
    <location>
        <position position="109"/>
    </location>
    <ligand>
        <name>ATP</name>
        <dbReference type="ChEBI" id="CHEBI:30616"/>
    </ligand>
</feature>
<feature type="binding site" evidence="1">
    <location>
        <position position="118"/>
    </location>
    <ligand>
        <name>substrate</name>
    </ligand>
</feature>
<feature type="binding site" evidence="1">
    <location>
        <begin position="244"/>
        <end position="245"/>
    </location>
    <ligand>
        <name>ATP</name>
        <dbReference type="ChEBI" id="CHEBI:30616"/>
    </ligand>
</feature>
<feature type="binding site" evidence="1">
    <location>
        <position position="251"/>
    </location>
    <ligand>
        <name>substrate</name>
    </ligand>
</feature>
<feature type="binding site" evidence="1">
    <location>
        <position position="300"/>
    </location>
    <ligand>
        <name>ATP</name>
        <dbReference type="ChEBI" id="CHEBI:30616"/>
    </ligand>
</feature>
<evidence type="ECO:0000255" key="1">
    <source>
        <dbReference type="HAMAP-Rule" id="MF_00174"/>
    </source>
</evidence>
<reference key="1">
    <citation type="journal article" date="2003" name="Nat. Biotechnol.">
        <title>The genome sequence of the entomopathogenic bacterium Photorhabdus luminescens.</title>
        <authorList>
            <person name="Duchaud E."/>
            <person name="Rusniok C."/>
            <person name="Frangeul L."/>
            <person name="Buchrieser C."/>
            <person name="Givaudan A."/>
            <person name="Taourit S."/>
            <person name="Bocs S."/>
            <person name="Boursaux-Eude C."/>
            <person name="Chandler M."/>
            <person name="Charles J.-F."/>
            <person name="Dassa E."/>
            <person name="Derose R."/>
            <person name="Derzelle S."/>
            <person name="Freyssinet G."/>
            <person name="Gaudriault S."/>
            <person name="Medigue C."/>
            <person name="Lanois A."/>
            <person name="Powell K."/>
            <person name="Siguier P."/>
            <person name="Vincent R."/>
            <person name="Wingate V."/>
            <person name="Zouine M."/>
            <person name="Glaser P."/>
            <person name="Boemare N."/>
            <person name="Danchin A."/>
            <person name="Kunst F."/>
        </authorList>
    </citation>
    <scope>NUCLEOTIDE SEQUENCE [LARGE SCALE GENOMIC DNA]</scope>
    <source>
        <strain>DSM 15139 / CIP 105565 / TT01</strain>
    </source>
</reference>